<reference key="1">
    <citation type="journal article" date="2009" name="PLoS ONE">
        <title>The complete genome of Teredinibacter turnerae T7901: an intracellular endosymbiont of marine wood-boring bivalves (shipworms).</title>
        <authorList>
            <person name="Yang J.C."/>
            <person name="Madupu R."/>
            <person name="Durkin A.S."/>
            <person name="Ekborg N.A."/>
            <person name="Pedamallu C.S."/>
            <person name="Hostetler J.B."/>
            <person name="Radune D."/>
            <person name="Toms B.S."/>
            <person name="Henrissat B."/>
            <person name="Coutinho P.M."/>
            <person name="Schwarz S."/>
            <person name="Field L."/>
            <person name="Trindade-Silva A.E."/>
            <person name="Soares C.A.G."/>
            <person name="Elshahawi S."/>
            <person name="Hanora A."/>
            <person name="Schmidt E.W."/>
            <person name="Haygood M.G."/>
            <person name="Posfai J."/>
            <person name="Benner J."/>
            <person name="Madinger C."/>
            <person name="Nove J."/>
            <person name="Anton B."/>
            <person name="Chaudhary K."/>
            <person name="Foster J."/>
            <person name="Holman A."/>
            <person name="Kumar S."/>
            <person name="Lessard P.A."/>
            <person name="Luyten Y.A."/>
            <person name="Slatko B."/>
            <person name="Wood N."/>
            <person name="Wu B."/>
            <person name="Teplitski M."/>
            <person name="Mougous J.D."/>
            <person name="Ward N."/>
            <person name="Eisen J.A."/>
            <person name="Badger J.H."/>
            <person name="Distel D.L."/>
        </authorList>
    </citation>
    <scope>NUCLEOTIDE SEQUENCE [LARGE SCALE GENOMIC DNA]</scope>
    <source>
        <strain>ATCC 39867 / T7901</strain>
    </source>
</reference>
<name>RIBA_TERTT</name>
<sequence length="199" mass="22114">MAIEYVESSKLPTAWGMFEMHGFTDSETDKEHLVLSMGDLAGDEPVLVRIHSECLTGDALFSLRCDCGAQLQAAMHRISIEGRGAIFYLRQEGRGIGLVNKIRAYHLQDKGADTVEANEALGFGADMRDYSMLKPMFEKMGISRVKLMTNNPRKIDALIGLGIDIAERLPHETGRNPHNSHYLETKRGKLGHLLEGDSE</sequence>
<dbReference type="EC" id="3.5.4.25" evidence="1"/>
<dbReference type="EMBL" id="CP001614">
    <property type="protein sequence ID" value="ACR11736.1"/>
    <property type="molecule type" value="Genomic_DNA"/>
</dbReference>
<dbReference type="RefSeq" id="WP_015817847.1">
    <property type="nucleotide sequence ID" value="NC_012997.1"/>
</dbReference>
<dbReference type="SMR" id="C5BS80"/>
<dbReference type="STRING" id="377629.TERTU_3696"/>
<dbReference type="GeneID" id="58411003"/>
<dbReference type="KEGG" id="ttu:TERTU_3696"/>
<dbReference type="eggNOG" id="COG0807">
    <property type="taxonomic scope" value="Bacteria"/>
</dbReference>
<dbReference type="HOGENOM" id="CLU_020273_2_1_6"/>
<dbReference type="OrthoDB" id="9793111at2"/>
<dbReference type="UniPathway" id="UPA00275">
    <property type="reaction ID" value="UER00400"/>
</dbReference>
<dbReference type="Proteomes" id="UP000009080">
    <property type="component" value="Chromosome"/>
</dbReference>
<dbReference type="GO" id="GO:0005829">
    <property type="term" value="C:cytosol"/>
    <property type="evidence" value="ECO:0007669"/>
    <property type="project" value="TreeGrafter"/>
</dbReference>
<dbReference type="GO" id="GO:0005525">
    <property type="term" value="F:GTP binding"/>
    <property type="evidence" value="ECO:0007669"/>
    <property type="project" value="UniProtKB-KW"/>
</dbReference>
<dbReference type="GO" id="GO:0003935">
    <property type="term" value="F:GTP cyclohydrolase II activity"/>
    <property type="evidence" value="ECO:0007669"/>
    <property type="project" value="UniProtKB-UniRule"/>
</dbReference>
<dbReference type="GO" id="GO:0008270">
    <property type="term" value="F:zinc ion binding"/>
    <property type="evidence" value="ECO:0007669"/>
    <property type="project" value="UniProtKB-UniRule"/>
</dbReference>
<dbReference type="GO" id="GO:0009231">
    <property type="term" value="P:riboflavin biosynthetic process"/>
    <property type="evidence" value="ECO:0007669"/>
    <property type="project" value="UniProtKB-UniRule"/>
</dbReference>
<dbReference type="CDD" id="cd00641">
    <property type="entry name" value="GTP_cyclohydro2"/>
    <property type="match status" value="1"/>
</dbReference>
<dbReference type="FunFam" id="3.40.50.10990:FF:000002">
    <property type="entry name" value="GTP cyclohydrolase-2"/>
    <property type="match status" value="1"/>
</dbReference>
<dbReference type="Gene3D" id="3.40.50.10990">
    <property type="entry name" value="GTP cyclohydrolase II"/>
    <property type="match status" value="1"/>
</dbReference>
<dbReference type="HAMAP" id="MF_00179">
    <property type="entry name" value="RibA"/>
    <property type="match status" value="1"/>
</dbReference>
<dbReference type="InterPro" id="IPR032677">
    <property type="entry name" value="GTP_cyclohydro_II"/>
</dbReference>
<dbReference type="InterPro" id="IPR000926">
    <property type="entry name" value="RibA"/>
</dbReference>
<dbReference type="InterPro" id="IPR036144">
    <property type="entry name" value="RibA-like_sf"/>
</dbReference>
<dbReference type="NCBIfam" id="NF001591">
    <property type="entry name" value="PRK00393.1"/>
    <property type="match status" value="1"/>
</dbReference>
<dbReference type="NCBIfam" id="TIGR00505">
    <property type="entry name" value="ribA"/>
    <property type="match status" value="1"/>
</dbReference>
<dbReference type="PANTHER" id="PTHR21327:SF18">
    <property type="entry name" value="3,4-DIHYDROXY-2-BUTANONE 4-PHOSPHATE SYNTHASE"/>
    <property type="match status" value="1"/>
</dbReference>
<dbReference type="PANTHER" id="PTHR21327">
    <property type="entry name" value="GTP CYCLOHYDROLASE II-RELATED"/>
    <property type="match status" value="1"/>
</dbReference>
<dbReference type="Pfam" id="PF00925">
    <property type="entry name" value="GTP_cyclohydro2"/>
    <property type="match status" value="1"/>
</dbReference>
<dbReference type="SUPFAM" id="SSF142695">
    <property type="entry name" value="RibA-like"/>
    <property type="match status" value="1"/>
</dbReference>
<evidence type="ECO:0000255" key="1">
    <source>
        <dbReference type="HAMAP-Rule" id="MF_00179"/>
    </source>
</evidence>
<evidence type="ECO:0000256" key="2">
    <source>
        <dbReference type="SAM" id="MobiDB-lite"/>
    </source>
</evidence>
<accession>C5BS80</accession>
<gene>
    <name evidence="1" type="primary">ribA</name>
    <name type="ordered locus">TERTU_3696</name>
</gene>
<keyword id="KW-0342">GTP-binding</keyword>
<keyword id="KW-0378">Hydrolase</keyword>
<keyword id="KW-0479">Metal-binding</keyword>
<keyword id="KW-0547">Nucleotide-binding</keyword>
<keyword id="KW-1185">Reference proteome</keyword>
<keyword id="KW-0686">Riboflavin biosynthesis</keyword>
<keyword id="KW-0862">Zinc</keyword>
<protein>
    <recommendedName>
        <fullName evidence="1">GTP cyclohydrolase-2</fullName>
        <ecNumber evidence="1">3.5.4.25</ecNumber>
    </recommendedName>
    <alternativeName>
        <fullName evidence="1">GTP cyclohydrolase II</fullName>
    </alternativeName>
</protein>
<comment type="function">
    <text evidence="1">Catalyzes the conversion of GTP to 2,5-diamino-6-ribosylamino-4(3H)-pyrimidinone 5'-phosphate (DARP), formate and pyrophosphate.</text>
</comment>
<comment type="catalytic activity">
    <reaction evidence="1">
        <text>GTP + 4 H2O = 2,5-diamino-6-hydroxy-4-(5-phosphoribosylamino)-pyrimidine + formate + 2 phosphate + 3 H(+)</text>
        <dbReference type="Rhea" id="RHEA:23704"/>
        <dbReference type="ChEBI" id="CHEBI:15377"/>
        <dbReference type="ChEBI" id="CHEBI:15378"/>
        <dbReference type="ChEBI" id="CHEBI:15740"/>
        <dbReference type="ChEBI" id="CHEBI:37565"/>
        <dbReference type="ChEBI" id="CHEBI:43474"/>
        <dbReference type="ChEBI" id="CHEBI:58614"/>
        <dbReference type="EC" id="3.5.4.25"/>
    </reaction>
</comment>
<comment type="cofactor">
    <cofactor evidence="1">
        <name>Zn(2+)</name>
        <dbReference type="ChEBI" id="CHEBI:29105"/>
    </cofactor>
    <text evidence="1">Binds 1 zinc ion per subunit.</text>
</comment>
<comment type="pathway">
    <text evidence="1">Cofactor biosynthesis; riboflavin biosynthesis; 5-amino-6-(D-ribitylamino)uracil from GTP: step 1/4.</text>
</comment>
<comment type="similarity">
    <text evidence="1">Belongs to the GTP cyclohydrolase II family.</text>
</comment>
<organism>
    <name type="scientific">Teredinibacter turnerae (strain ATCC 39867 / T7901)</name>
    <dbReference type="NCBI Taxonomy" id="377629"/>
    <lineage>
        <taxon>Bacteria</taxon>
        <taxon>Pseudomonadati</taxon>
        <taxon>Pseudomonadota</taxon>
        <taxon>Gammaproteobacteria</taxon>
        <taxon>Cellvibrionales</taxon>
        <taxon>Cellvibrionaceae</taxon>
        <taxon>Teredinibacter</taxon>
    </lineage>
</organism>
<proteinExistence type="inferred from homology"/>
<feature type="chain" id="PRO_1000203815" description="GTP cyclohydrolase-2">
    <location>
        <begin position="1"/>
        <end position="199"/>
    </location>
</feature>
<feature type="region of interest" description="Disordered" evidence="2">
    <location>
        <begin position="172"/>
        <end position="199"/>
    </location>
</feature>
<feature type="active site" description="Proton acceptor" evidence="1">
    <location>
        <position position="126"/>
    </location>
</feature>
<feature type="active site" description="Nucleophile" evidence="1">
    <location>
        <position position="128"/>
    </location>
</feature>
<feature type="binding site" evidence="1">
    <location>
        <begin position="49"/>
        <end position="53"/>
    </location>
    <ligand>
        <name>GTP</name>
        <dbReference type="ChEBI" id="CHEBI:37565"/>
    </ligand>
</feature>
<feature type="binding site" evidence="1">
    <location>
        <position position="54"/>
    </location>
    <ligand>
        <name>Zn(2+)</name>
        <dbReference type="ChEBI" id="CHEBI:29105"/>
        <note>catalytic</note>
    </ligand>
</feature>
<feature type="binding site" evidence="1">
    <location>
        <position position="65"/>
    </location>
    <ligand>
        <name>Zn(2+)</name>
        <dbReference type="ChEBI" id="CHEBI:29105"/>
        <note>catalytic</note>
    </ligand>
</feature>
<feature type="binding site" evidence="1">
    <location>
        <position position="67"/>
    </location>
    <ligand>
        <name>Zn(2+)</name>
        <dbReference type="ChEBI" id="CHEBI:29105"/>
        <note>catalytic</note>
    </ligand>
</feature>
<feature type="binding site" evidence="1">
    <location>
        <position position="70"/>
    </location>
    <ligand>
        <name>GTP</name>
        <dbReference type="ChEBI" id="CHEBI:37565"/>
    </ligand>
</feature>
<feature type="binding site" evidence="1">
    <location>
        <begin position="92"/>
        <end position="94"/>
    </location>
    <ligand>
        <name>GTP</name>
        <dbReference type="ChEBI" id="CHEBI:37565"/>
    </ligand>
</feature>
<feature type="binding site" evidence="1">
    <location>
        <position position="114"/>
    </location>
    <ligand>
        <name>GTP</name>
        <dbReference type="ChEBI" id="CHEBI:37565"/>
    </ligand>
</feature>
<feature type="binding site" evidence="1">
    <location>
        <position position="149"/>
    </location>
    <ligand>
        <name>GTP</name>
        <dbReference type="ChEBI" id="CHEBI:37565"/>
    </ligand>
</feature>
<feature type="binding site" evidence="1">
    <location>
        <position position="154"/>
    </location>
    <ligand>
        <name>GTP</name>
        <dbReference type="ChEBI" id="CHEBI:37565"/>
    </ligand>
</feature>